<accession>B0BB97</accession>
<dbReference type="EC" id="5.6.1.7" evidence="1"/>
<dbReference type="EMBL" id="AM884177">
    <property type="protein sequence ID" value="CAP06759.1"/>
    <property type="molecule type" value="Genomic_DNA"/>
</dbReference>
<dbReference type="RefSeq" id="WP_009873565.1">
    <property type="nucleotide sequence ID" value="NC_010280.2"/>
</dbReference>
<dbReference type="SMR" id="B0BB97"/>
<dbReference type="KEGG" id="ctl:CTLon_0361"/>
<dbReference type="HOGENOM" id="CLU_016503_3_0_0"/>
<dbReference type="Proteomes" id="UP001154401">
    <property type="component" value="Chromosome"/>
</dbReference>
<dbReference type="GO" id="GO:0005737">
    <property type="term" value="C:cytoplasm"/>
    <property type="evidence" value="ECO:0007669"/>
    <property type="project" value="UniProtKB-SubCell"/>
</dbReference>
<dbReference type="GO" id="GO:0005524">
    <property type="term" value="F:ATP binding"/>
    <property type="evidence" value="ECO:0007669"/>
    <property type="project" value="UniProtKB-UniRule"/>
</dbReference>
<dbReference type="GO" id="GO:0140662">
    <property type="term" value="F:ATP-dependent protein folding chaperone"/>
    <property type="evidence" value="ECO:0007669"/>
    <property type="project" value="InterPro"/>
</dbReference>
<dbReference type="GO" id="GO:0016853">
    <property type="term" value="F:isomerase activity"/>
    <property type="evidence" value="ECO:0007669"/>
    <property type="project" value="UniProtKB-KW"/>
</dbReference>
<dbReference type="GO" id="GO:0051082">
    <property type="term" value="F:unfolded protein binding"/>
    <property type="evidence" value="ECO:0007669"/>
    <property type="project" value="UniProtKB-UniRule"/>
</dbReference>
<dbReference type="GO" id="GO:0042026">
    <property type="term" value="P:protein refolding"/>
    <property type="evidence" value="ECO:0007669"/>
    <property type="project" value="UniProtKB-UniRule"/>
</dbReference>
<dbReference type="CDD" id="cd03344">
    <property type="entry name" value="GroEL"/>
    <property type="match status" value="1"/>
</dbReference>
<dbReference type="FunFam" id="1.10.560.10:FF:000001">
    <property type="entry name" value="60 kDa chaperonin"/>
    <property type="match status" value="1"/>
</dbReference>
<dbReference type="FunFam" id="3.50.7.10:FF:000001">
    <property type="entry name" value="60 kDa chaperonin"/>
    <property type="match status" value="1"/>
</dbReference>
<dbReference type="Gene3D" id="3.50.7.10">
    <property type="entry name" value="GroEL"/>
    <property type="match status" value="1"/>
</dbReference>
<dbReference type="Gene3D" id="1.10.560.10">
    <property type="entry name" value="GroEL-like equatorial domain"/>
    <property type="match status" value="1"/>
</dbReference>
<dbReference type="Gene3D" id="3.30.260.10">
    <property type="entry name" value="TCP-1-like chaperonin intermediate domain"/>
    <property type="match status" value="1"/>
</dbReference>
<dbReference type="HAMAP" id="MF_00600">
    <property type="entry name" value="CH60"/>
    <property type="match status" value="1"/>
</dbReference>
<dbReference type="InterPro" id="IPR018370">
    <property type="entry name" value="Chaperonin_Cpn60_CS"/>
</dbReference>
<dbReference type="InterPro" id="IPR001844">
    <property type="entry name" value="Cpn60/GroEL"/>
</dbReference>
<dbReference type="InterPro" id="IPR002423">
    <property type="entry name" value="Cpn60/GroEL/TCP-1"/>
</dbReference>
<dbReference type="InterPro" id="IPR027409">
    <property type="entry name" value="GroEL-like_apical_dom_sf"/>
</dbReference>
<dbReference type="InterPro" id="IPR027413">
    <property type="entry name" value="GROEL-like_equatorial_sf"/>
</dbReference>
<dbReference type="InterPro" id="IPR027410">
    <property type="entry name" value="TCP-1-like_intermed_sf"/>
</dbReference>
<dbReference type="NCBIfam" id="TIGR02348">
    <property type="entry name" value="GroEL"/>
    <property type="match status" value="1"/>
</dbReference>
<dbReference type="NCBIfam" id="NF000592">
    <property type="entry name" value="PRK00013.1"/>
    <property type="match status" value="1"/>
</dbReference>
<dbReference type="NCBIfam" id="NF009487">
    <property type="entry name" value="PRK12849.1"/>
    <property type="match status" value="1"/>
</dbReference>
<dbReference type="NCBIfam" id="NF009488">
    <property type="entry name" value="PRK12850.1"/>
    <property type="match status" value="1"/>
</dbReference>
<dbReference type="NCBIfam" id="NF009489">
    <property type="entry name" value="PRK12851.1"/>
    <property type="match status" value="1"/>
</dbReference>
<dbReference type="PANTHER" id="PTHR45633">
    <property type="entry name" value="60 KDA HEAT SHOCK PROTEIN, MITOCHONDRIAL"/>
    <property type="match status" value="1"/>
</dbReference>
<dbReference type="Pfam" id="PF00118">
    <property type="entry name" value="Cpn60_TCP1"/>
    <property type="match status" value="1"/>
</dbReference>
<dbReference type="PRINTS" id="PR00298">
    <property type="entry name" value="CHAPERONIN60"/>
</dbReference>
<dbReference type="SUPFAM" id="SSF52029">
    <property type="entry name" value="GroEL apical domain-like"/>
    <property type="match status" value="1"/>
</dbReference>
<dbReference type="SUPFAM" id="SSF48592">
    <property type="entry name" value="GroEL equatorial domain-like"/>
    <property type="match status" value="1"/>
</dbReference>
<dbReference type="SUPFAM" id="SSF54849">
    <property type="entry name" value="GroEL-intermediate domain like"/>
    <property type="match status" value="1"/>
</dbReference>
<dbReference type="PROSITE" id="PS00296">
    <property type="entry name" value="CHAPERONINS_CPN60"/>
    <property type="match status" value="1"/>
</dbReference>
<gene>
    <name evidence="1" type="primary">groEL</name>
    <name evidence="1" type="synonym">groL</name>
    <name type="ordered locus">CTLon_0361</name>
</gene>
<protein>
    <recommendedName>
        <fullName evidence="1">Chaperonin GroEL</fullName>
        <ecNumber evidence="1">5.6.1.7</ecNumber>
    </recommendedName>
    <alternativeName>
        <fullName evidence="1">60 kDa chaperonin</fullName>
    </alternativeName>
    <alternativeName>
        <fullName evidence="1">Chaperonin-60</fullName>
        <shortName evidence="1">Cpn60</shortName>
    </alternativeName>
</protein>
<keyword id="KW-0067">ATP-binding</keyword>
<keyword id="KW-0143">Chaperone</keyword>
<keyword id="KW-0963">Cytoplasm</keyword>
<keyword id="KW-0413">Isomerase</keyword>
<keyword id="KW-0547">Nucleotide-binding</keyword>
<organism>
    <name type="scientific">Chlamydia trachomatis serovar L2b (strain UCH-1/proctitis)</name>
    <dbReference type="NCBI Taxonomy" id="471473"/>
    <lineage>
        <taxon>Bacteria</taxon>
        <taxon>Pseudomonadati</taxon>
        <taxon>Chlamydiota</taxon>
        <taxon>Chlamydiia</taxon>
        <taxon>Chlamydiales</taxon>
        <taxon>Chlamydiaceae</taxon>
        <taxon>Chlamydia/Chlamydophila group</taxon>
        <taxon>Chlamydia</taxon>
    </lineage>
</organism>
<comment type="function">
    <text evidence="1">Together with its co-chaperonin GroES, plays an essential role in assisting protein folding. The GroEL-GroES system forms a nano-cage that allows encapsulation of the non-native substrate proteins and provides a physical environment optimized to promote and accelerate protein folding.</text>
</comment>
<comment type="catalytic activity">
    <reaction evidence="1">
        <text>ATP + H2O + a folded polypeptide = ADP + phosphate + an unfolded polypeptide.</text>
        <dbReference type="EC" id="5.6.1.7"/>
    </reaction>
</comment>
<comment type="subunit">
    <text evidence="1">Forms a cylinder of 14 subunits composed of two heptameric rings stacked back-to-back. Interacts with the co-chaperonin GroES.</text>
</comment>
<comment type="subcellular location">
    <subcellularLocation>
        <location evidence="1">Cytoplasm</location>
    </subcellularLocation>
</comment>
<comment type="similarity">
    <text evidence="1">Belongs to the chaperonin (HSP60) family.</text>
</comment>
<evidence type="ECO:0000255" key="1">
    <source>
        <dbReference type="HAMAP-Rule" id="MF_00600"/>
    </source>
</evidence>
<proteinExistence type="inferred from homology"/>
<feature type="chain" id="PRO_1000129991" description="Chaperonin GroEL">
    <location>
        <begin position="1"/>
        <end position="544"/>
    </location>
</feature>
<feature type="binding site" evidence="1">
    <location>
        <begin position="30"/>
        <end position="33"/>
    </location>
    <ligand>
        <name>ATP</name>
        <dbReference type="ChEBI" id="CHEBI:30616"/>
    </ligand>
</feature>
<feature type="binding site" evidence="1">
    <location>
        <position position="51"/>
    </location>
    <ligand>
        <name>ATP</name>
        <dbReference type="ChEBI" id="CHEBI:30616"/>
    </ligand>
</feature>
<feature type="binding site" evidence="1">
    <location>
        <begin position="87"/>
        <end position="91"/>
    </location>
    <ligand>
        <name>ATP</name>
        <dbReference type="ChEBI" id="CHEBI:30616"/>
    </ligand>
</feature>
<feature type="binding site" evidence="1">
    <location>
        <position position="415"/>
    </location>
    <ligand>
        <name>ATP</name>
        <dbReference type="ChEBI" id="CHEBI:30616"/>
    </ligand>
</feature>
<feature type="binding site" evidence="1">
    <location>
        <begin position="481"/>
        <end position="483"/>
    </location>
    <ligand>
        <name>ATP</name>
        <dbReference type="ChEBI" id="CHEBI:30616"/>
    </ligand>
</feature>
<feature type="binding site" evidence="1">
    <location>
        <position position="497"/>
    </location>
    <ligand>
        <name>ATP</name>
        <dbReference type="ChEBI" id="CHEBI:30616"/>
    </ligand>
</feature>
<reference key="1">
    <citation type="journal article" date="2008" name="Genome Res.">
        <title>Chlamydia trachomatis: genome sequence analysis of lymphogranuloma venereum isolates.</title>
        <authorList>
            <person name="Thomson N.R."/>
            <person name="Holden M.T.G."/>
            <person name="Carder C."/>
            <person name="Lennard N."/>
            <person name="Lockey S.J."/>
            <person name="Marsh P."/>
            <person name="Skipp P."/>
            <person name="O'Connor C.D."/>
            <person name="Goodhead I."/>
            <person name="Norbertzcak H."/>
            <person name="Harris B."/>
            <person name="Ormond D."/>
            <person name="Rance R."/>
            <person name="Quail M.A."/>
            <person name="Parkhill J."/>
            <person name="Stephens R.S."/>
            <person name="Clarke I.N."/>
        </authorList>
    </citation>
    <scope>NUCLEOTIDE SEQUENCE [LARGE SCALE GENOMIC DNA]</scope>
    <source>
        <strain>UCH-1/proctitis</strain>
    </source>
</reference>
<name>CH60_CHLTB</name>
<sequence length="544" mass="58091">MVAKNIKYNEEARKKIQKGVKTLAEAVKVTLGPKGRHVVIDKSFGSPQVTKDGVTVAKEVELADKHENMGAQMVKEVASKTADKAGDGTTTATVLAEAIYTEGLRNVTAGANPMDLKRGIDKAVKVVVDQVKKISKPVQHHKEIAQVATISANNDAEIGNLIAEAMEKVGKNGSITVEEAKGFETVLDVVEGMNFNRGYLSSYFATNPETQECVLEDALVLIYDKKISGIKDFLPVLQQVAESGRPLLIIAEDIEGEALATLVVNRIRGGFRVCAVKAPGFGDRRKAMLEDIAILTGGQLISEELGMKLENANLAMLGKAKKVIVSKEDTTIVEGMGEKEALEARCESIKKQIEDSSSDYDKEKLQERLAKLSGGVAVIRVGAATEIEMKEKKDRVDDAQHATIAAVEEGILPGGGTALIRCIPTLEAFLPMLTNEDEQIGARIVLKALSAPLKQIAANAGKEGAIIFQQVMSRSANEGYDALRDAYTDMLEAGILDPAKVTRSALESAASVAGLLLTTEALIAEIPEEKPAAAPAMPGAGMDY</sequence>